<evidence type="ECO:0000255" key="1">
    <source>
        <dbReference type="HAMAP-Rule" id="MF_01679"/>
    </source>
</evidence>
<dbReference type="EC" id="5.3.2.5" evidence="1"/>
<dbReference type="EMBL" id="CP001176">
    <property type="protein sequence ID" value="ACK59321.1"/>
    <property type="molecule type" value="Genomic_DNA"/>
</dbReference>
<dbReference type="RefSeq" id="WP_000014180.1">
    <property type="nucleotide sequence ID" value="NC_011725.1"/>
</dbReference>
<dbReference type="SMR" id="B7H927"/>
<dbReference type="KEGG" id="bcb:BCB4264_A4145"/>
<dbReference type="HOGENOM" id="CLU_031450_3_1_9"/>
<dbReference type="UniPathway" id="UPA00904">
    <property type="reaction ID" value="UER00876"/>
</dbReference>
<dbReference type="Proteomes" id="UP000007096">
    <property type="component" value="Chromosome"/>
</dbReference>
<dbReference type="GO" id="GO:0043715">
    <property type="term" value="F:2,3-diketo-5-methylthiopentyl-1-phosphate enolase activity"/>
    <property type="evidence" value="ECO:0007669"/>
    <property type="project" value="UniProtKB-UniRule"/>
</dbReference>
<dbReference type="GO" id="GO:0000287">
    <property type="term" value="F:magnesium ion binding"/>
    <property type="evidence" value="ECO:0007669"/>
    <property type="project" value="UniProtKB-UniRule"/>
</dbReference>
<dbReference type="GO" id="GO:0016984">
    <property type="term" value="F:ribulose-bisphosphate carboxylase activity"/>
    <property type="evidence" value="ECO:0007669"/>
    <property type="project" value="InterPro"/>
</dbReference>
<dbReference type="GO" id="GO:0015977">
    <property type="term" value="P:carbon fixation"/>
    <property type="evidence" value="ECO:0007669"/>
    <property type="project" value="InterPro"/>
</dbReference>
<dbReference type="GO" id="GO:0019509">
    <property type="term" value="P:L-methionine salvage from methylthioadenosine"/>
    <property type="evidence" value="ECO:0007669"/>
    <property type="project" value="UniProtKB-UniRule"/>
</dbReference>
<dbReference type="CDD" id="cd08209">
    <property type="entry name" value="RLP_DK-MTP-1-P-enolase"/>
    <property type="match status" value="1"/>
</dbReference>
<dbReference type="FunFam" id="3.20.20.110:FF:000002">
    <property type="entry name" value="2,3-diketo-5-methylthiopentyl-1-phosphate enolase"/>
    <property type="match status" value="1"/>
</dbReference>
<dbReference type="Gene3D" id="3.20.20.110">
    <property type="entry name" value="Ribulose bisphosphate carboxylase, large subunit, C-terminal domain"/>
    <property type="match status" value="1"/>
</dbReference>
<dbReference type="Gene3D" id="3.30.70.150">
    <property type="entry name" value="RuBisCO large subunit, N-terminal domain"/>
    <property type="match status" value="1"/>
</dbReference>
<dbReference type="HAMAP" id="MF_01679">
    <property type="entry name" value="Salvage_MtnW"/>
    <property type="match status" value="1"/>
</dbReference>
<dbReference type="InterPro" id="IPR017717">
    <property type="entry name" value="Diketo-Methiopentyl-P_enolase"/>
</dbReference>
<dbReference type="InterPro" id="IPR033966">
    <property type="entry name" value="RuBisCO"/>
</dbReference>
<dbReference type="InterPro" id="IPR000685">
    <property type="entry name" value="RuBisCO_lsu_C"/>
</dbReference>
<dbReference type="InterPro" id="IPR036376">
    <property type="entry name" value="RuBisCO_lsu_C_sf"/>
</dbReference>
<dbReference type="InterPro" id="IPR017443">
    <property type="entry name" value="RuBisCO_lsu_fd_N"/>
</dbReference>
<dbReference type="InterPro" id="IPR036422">
    <property type="entry name" value="RuBisCO_lsu_N_sf"/>
</dbReference>
<dbReference type="NCBIfam" id="NF007095">
    <property type="entry name" value="PRK09549.1"/>
    <property type="match status" value="1"/>
</dbReference>
<dbReference type="NCBIfam" id="TIGR03332">
    <property type="entry name" value="salvage_mtnW"/>
    <property type="match status" value="1"/>
</dbReference>
<dbReference type="PANTHER" id="PTHR42704">
    <property type="entry name" value="RIBULOSE BISPHOSPHATE CARBOXYLASE"/>
    <property type="match status" value="1"/>
</dbReference>
<dbReference type="PANTHER" id="PTHR42704:SF17">
    <property type="entry name" value="RIBULOSE BISPHOSPHATE CARBOXYLASE LARGE CHAIN"/>
    <property type="match status" value="1"/>
</dbReference>
<dbReference type="Pfam" id="PF00016">
    <property type="entry name" value="RuBisCO_large"/>
    <property type="match status" value="1"/>
</dbReference>
<dbReference type="Pfam" id="PF02788">
    <property type="entry name" value="RuBisCO_large_N"/>
    <property type="match status" value="1"/>
</dbReference>
<dbReference type="SFLD" id="SFLDF00157">
    <property type="entry name" value="2_3-diketo-5-methylthiopentyl"/>
    <property type="match status" value="1"/>
</dbReference>
<dbReference type="SFLD" id="SFLDS00014">
    <property type="entry name" value="RuBisCO"/>
    <property type="match status" value="1"/>
</dbReference>
<dbReference type="SUPFAM" id="SSF51649">
    <property type="entry name" value="RuBisCo, C-terminal domain"/>
    <property type="match status" value="1"/>
</dbReference>
<dbReference type="SUPFAM" id="SSF54966">
    <property type="entry name" value="RuBisCO, large subunit, small (N-terminal) domain"/>
    <property type="match status" value="1"/>
</dbReference>
<accession>B7H927</accession>
<gene>
    <name evidence="1" type="primary">mtnW</name>
    <name type="ordered locus">BCB4264_A4145</name>
</gene>
<name>MTNW_BACC4</name>
<keyword id="KW-0028">Amino-acid biosynthesis</keyword>
<keyword id="KW-0413">Isomerase</keyword>
<keyword id="KW-0460">Magnesium</keyword>
<keyword id="KW-0479">Metal-binding</keyword>
<keyword id="KW-0486">Methionine biosynthesis</keyword>
<proteinExistence type="inferred from homology"/>
<protein>
    <recommendedName>
        <fullName evidence="1">2,3-diketo-5-methylthiopentyl-1-phosphate enolase</fullName>
        <shortName evidence="1">DK-MTP-1-P enolase</shortName>
        <ecNumber evidence="1">5.3.2.5</ecNumber>
    </recommendedName>
    <alternativeName>
        <fullName evidence="1">RuBisCO-like protein</fullName>
        <shortName evidence="1">RLP</shortName>
    </alternativeName>
</protein>
<reference key="1">
    <citation type="submission" date="2008-10" db="EMBL/GenBank/DDBJ databases">
        <title>Genome sequence of Bacillus cereus B4264.</title>
        <authorList>
            <person name="Dodson R.J."/>
            <person name="Durkin A.S."/>
            <person name="Rosovitz M.J."/>
            <person name="Rasko D.A."/>
            <person name="Hoffmaster A."/>
            <person name="Ravel J."/>
            <person name="Sutton G."/>
        </authorList>
    </citation>
    <scope>NUCLEOTIDE SEQUENCE [LARGE SCALE GENOMIC DNA]</scope>
    <source>
        <strain>B4264</strain>
    </source>
</reference>
<feature type="chain" id="PRO_1000187378" description="2,3-diketo-5-methylthiopentyl-1-phosphate enolase">
    <location>
        <begin position="1"/>
        <end position="414"/>
    </location>
</feature>
<feature type="active site" description="Proton acceptor" evidence="1">
    <location>
        <position position="99"/>
    </location>
</feature>
<feature type="binding site" evidence="1">
    <location>
        <position position="148"/>
    </location>
    <ligand>
        <name>substrate</name>
    </ligand>
</feature>
<feature type="binding site" evidence="1">
    <location>
        <begin position="174"/>
        <end position="177"/>
    </location>
    <ligand>
        <name>substrate</name>
    </ligand>
</feature>
<feature type="binding site" description="via carbamate group" evidence="1">
    <location>
        <position position="174"/>
    </location>
    <ligand>
        <name>Mg(2+)</name>
        <dbReference type="ChEBI" id="CHEBI:18420"/>
    </ligand>
</feature>
<feature type="binding site" evidence="1">
    <location>
        <position position="176"/>
    </location>
    <ligand>
        <name>Mg(2+)</name>
        <dbReference type="ChEBI" id="CHEBI:18420"/>
    </ligand>
</feature>
<feature type="binding site" evidence="1">
    <location>
        <position position="177"/>
    </location>
    <ligand>
        <name>Mg(2+)</name>
        <dbReference type="ChEBI" id="CHEBI:18420"/>
    </ligand>
</feature>
<feature type="binding site" evidence="1">
    <location>
        <position position="265"/>
    </location>
    <ligand>
        <name>substrate</name>
    </ligand>
</feature>
<feature type="binding site" evidence="1">
    <location>
        <position position="338"/>
    </location>
    <ligand>
        <name>substrate</name>
    </ligand>
</feature>
<feature type="binding site" evidence="1">
    <location>
        <begin position="360"/>
        <end position="361"/>
    </location>
    <ligand>
        <name>substrate</name>
    </ligand>
</feature>
<feature type="modified residue" description="N6-carboxylysine" evidence="1">
    <location>
        <position position="174"/>
    </location>
</feature>
<sequence length="414" mass="45523">MSGIIATYLIHDDSHNLEKKAEQIALGLTIGSWTHLPHLLQEQLKQHKGNVIHVEELAEHEHTNSYLRKKVKRGIIKIEYPLLNFSPDLPAILTTTFGKLSLDGEVKLIDLTFSDELKKHFPGPKFGIDGIRNLLQVHDRPLLMSIFKGMIGRNIGYLKTQLRDQAIGGVDIVKDDEILFENALTPLTKRIVSGKEVLQSVYETYGHKTLYAVNLTGRTFDLKENAKRAVQAGADILLFNVFAYGLDVLQSLAEDDEIPVPIMAHPAVSGAYSASKLYGVSSPLLLGKLLRYAGADFSLFPSPYGSVALEKEEALAISKYLTEDDAFFKKSFSVPSAGIHPGFVPFIVRDFGKDVVINAGGGIHGHPNGAQGGGKAFRTAIDATLQNKPLHEVDDINLHSALQIWGNPSYEVKL</sequence>
<organism>
    <name type="scientific">Bacillus cereus (strain B4264)</name>
    <dbReference type="NCBI Taxonomy" id="405532"/>
    <lineage>
        <taxon>Bacteria</taxon>
        <taxon>Bacillati</taxon>
        <taxon>Bacillota</taxon>
        <taxon>Bacilli</taxon>
        <taxon>Bacillales</taxon>
        <taxon>Bacillaceae</taxon>
        <taxon>Bacillus</taxon>
        <taxon>Bacillus cereus group</taxon>
    </lineage>
</organism>
<comment type="function">
    <text evidence="1">Catalyzes the enolization of 2,3-diketo-5-methylthiopentyl-1-phosphate (DK-MTP-1-P) into 2-hydroxy-3-keto-5-methylthiopentenyl-1-phosphate (HK-MTPenyl-1-P).</text>
</comment>
<comment type="catalytic activity">
    <reaction evidence="1">
        <text>5-methylsulfanyl-2,3-dioxopentyl phosphate = 2-hydroxy-5-methylsulfanyl-3-oxopent-1-enyl phosphate</text>
        <dbReference type="Rhea" id="RHEA:18769"/>
        <dbReference type="ChEBI" id="CHEBI:58828"/>
        <dbReference type="ChEBI" id="CHEBI:59505"/>
        <dbReference type="EC" id="5.3.2.5"/>
    </reaction>
</comment>
<comment type="cofactor">
    <cofactor evidence="1">
        <name>Mg(2+)</name>
        <dbReference type="ChEBI" id="CHEBI:18420"/>
    </cofactor>
    <text evidence="1">Binds 1 Mg(2+) ion per subunit.</text>
</comment>
<comment type="pathway">
    <text evidence="1">Amino-acid biosynthesis; L-methionine biosynthesis via salvage pathway; L-methionine from S-methyl-5-thio-alpha-D-ribose 1-phosphate: step 3/6.</text>
</comment>
<comment type="subunit">
    <text evidence="1">Homodimer.</text>
</comment>
<comment type="miscellaneous">
    <text evidence="1">Has no RuBP-carboxylation activity.</text>
</comment>
<comment type="similarity">
    <text evidence="1">Belongs to the RuBisCO large chain family. Type IV subfamily.</text>
</comment>